<gene>
    <name evidence="1" type="primary">truB</name>
    <name type="ordered locus">DehaBAV1_0872</name>
</gene>
<proteinExistence type="inferred from homology"/>
<sequence>MDGILNINKPFGITSFDVVAKVRRIYSQKRVGHGGTLDPYATGVIPVFLGKSTRLIEYLSSVSKTYLAEIELGVETDSYDSEGEITFRKTCDYVTREMIYKTLMDFQGEIIQIPPMYSAVKHRGMRLYNLARQGIEVERIPRVATIYGIELLNYTSPVLRVRIECGHGTYIRSLAFDLGRKLGCGAYLKSLVREAYGQFNLTNSLDFADLEAAKCDGKLAGILLPLETAIGHLPRVSLDEENITRLVNGLEITLDRIDKPEAVAVYNAENSFVAIIQPETDGTWHPAKVFIRQSPKPDAN</sequence>
<comment type="function">
    <text evidence="1">Responsible for synthesis of pseudouridine from uracil-55 in the psi GC loop of transfer RNAs.</text>
</comment>
<comment type="catalytic activity">
    <reaction evidence="1">
        <text>uridine(55) in tRNA = pseudouridine(55) in tRNA</text>
        <dbReference type="Rhea" id="RHEA:42532"/>
        <dbReference type="Rhea" id="RHEA-COMP:10101"/>
        <dbReference type="Rhea" id="RHEA-COMP:10102"/>
        <dbReference type="ChEBI" id="CHEBI:65314"/>
        <dbReference type="ChEBI" id="CHEBI:65315"/>
        <dbReference type="EC" id="5.4.99.25"/>
    </reaction>
</comment>
<comment type="similarity">
    <text evidence="1">Belongs to the pseudouridine synthase TruB family. Type 1 subfamily.</text>
</comment>
<reference key="1">
    <citation type="submission" date="2007-05" db="EMBL/GenBank/DDBJ databases">
        <title>Complete sequence of Dehalococcoides sp. BAV1.</title>
        <authorList>
            <consortium name="US DOE Joint Genome Institute"/>
            <person name="Copeland A."/>
            <person name="Lucas S."/>
            <person name="Lapidus A."/>
            <person name="Barry K."/>
            <person name="Detter J.C."/>
            <person name="Glavina del Rio T."/>
            <person name="Hammon N."/>
            <person name="Israni S."/>
            <person name="Pitluck S."/>
            <person name="Lowry S."/>
            <person name="Clum A."/>
            <person name="Schmutz J."/>
            <person name="Larimer F."/>
            <person name="Land M."/>
            <person name="Hauser L."/>
            <person name="Kyrpides N."/>
            <person name="Kim E."/>
            <person name="Ritalahti K.M."/>
            <person name="Loeffler F."/>
            <person name="Richardson P."/>
        </authorList>
    </citation>
    <scope>NUCLEOTIDE SEQUENCE [LARGE SCALE GENOMIC DNA]</scope>
    <source>
        <strain>ATCC BAA-2100 / JCM 16839 / KCTC 5957 / BAV1</strain>
    </source>
</reference>
<feature type="chain" id="PRO_1000084580" description="tRNA pseudouridine synthase B">
    <location>
        <begin position="1"/>
        <end position="300"/>
    </location>
</feature>
<feature type="active site" description="Nucleophile" evidence="1">
    <location>
        <position position="38"/>
    </location>
</feature>
<keyword id="KW-0413">Isomerase</keyword>
<keyword id="KW-0819">tRNA processing</keyword>
<organism>
    <name type="scientific">Dehalococcoides mccartyi (strain ATCC BAA-2100 / JCM 16839 / KCTC 5957 / BAV1)</name>
    <dbReference type="NCBI Taxonomy" id="216389"/>
    <lineage>
        <taxon>Bacteria</taxon>
        <taxon>Bacillati</taxon>
        <taxon>Chloroflexota</taxon>
        <taxon>Dehalococcoidia</taxon>
        <taxon>Dehalococcoidales</taxon>
        <taxon>Dehalococcoidaceae</taxon>
        <taxon>Dehalococcoides</taxon>
    </lineage>
</organism>
<accession>A5FQR4</accession>
<protein>
    <recommendedName>
        <fullName evidence="1">tRNA pseudouridine synthase B</fullName>
        <ecNumber evidence="1">5.4.99.25</ecNumber>
    </recommendedName>
    <alternativeName>
        <fullName evidence="1">tRNA pseudouridine(55) synthase</fullName>
        <shortName evidence="1">Psi55 synthase</shortName>
    </alternativeName>
    <alternativeName>
        <fullName evidence="1">tRNA pseudouridylate synthase</fullName>
    </alternativeName>
    <alternativeName>
        <fullName evidence="1">tRNA-uridine isomerase</fullName>
    </alternativeName>
</protein>
<name>TRUB_DEHMB</name>
<dbReference type="EC" id="5.4.99.25" evidence="1"/>
<dbReference type="EMBL" id="CP000688">
    <property type="protein sequence ID" value="ABQ17454.1"/>
    <property type="molecule type" value="Genomic_DNA"/>
</dbReference>
<dbReference type="SMR" id="A5FQR4"/>
<dbReference type="KEGG" id="deb:DehaBAV1_0872"/>
<dbReference type="PATRIC" id="fig|216389.18.peg.922"/>
<dbReference type="HOGENOM" id="CLU_032087_0_1_0"/>
<dbReference type="GO" id="GO:0003723">
    <property type="term" value="F:RNA binding"/>
    <property type="evidence" value="ECO:0007669"/>
    <property type="project" value="InterPro"/>
</dbReference>
<dbReference type="GO" id="GO:0160148">
    <property type="term" value="F:tRNA pseudouridine(55) synthase activity"/>
    <property type="evidence" value="ECO:0007669"/>
    <property type="project" value="UniProtKB-EC"/>
</dbReference>
<dbReference type="GO" id="GO:1990481">
    <property type="term" value="P:mRNA pseudouridine synthesis"/>
    <property type="evidence" value="ECO:0007669"/>
    <property type="project" value="TreeGrafter"/>
</dbReference>
<dbReference type="GO" id="GO:0031119">
    <property type="term" value="P:tRNA pseudouridine synthesis"/>
    <property type="evidence" value="ECO:0007669"/>
    <property type="project" value="UniProtKB-UniRule"/>
</dbReference>
<dbReference type="CDD" id="cd02573">
    <property type="entry name" value="PseudoU_synth_EcTruB"/>
    <property type="match status" value="1"/>
</dbReference>
<dbReference type="Gene3D" id="3.30.2350.10">
    <property type="entry name" value="Pseudouridine synthase"/>
    <property type="match status" value="1"/>
</dbReference>
<dbReference type="HAMAP" id="MF_01080">
    <property type="entry name" value="TruB_bact"/>
    <property type="match status" value="1"/>
</dbReference>
<dbReference type="InterPro" id="IPR020103">
    <property type="entry name" value="PsdUridine_synth_cat_dom_sf"/>
</dbReference>
<dbReference type="InterPro" id="IPR002501">
    <property type="entry name" value="PsdUridine_synth_N"/>
</dbReference>
<dbReference type="InterPro" id="IPR014780">
    <property type="entry name" value="tRNA_psdUridine_synth_TruB"/>
</dbReference>
<dbReference type="InterPro" id="IPR032819">
    <property type="entry name" value="TruB_C"/>
</dbReference>
<dbReference type="NCBIfam" id="TIGR00431">
    <property type="entry name" value="TruB"/>
    <property type="match status" value="1"/>
</dbReference>
<dbReference type="PANTHER" id="PTHR13767:SF2">
    <property type="entry name" value="PSEUDOURIDYLATE SYNTHASE TRUB1"/>
    <property type="match status" value="1"/>
</dbReference>
<dbReference type="PANTHER" id="PTHR13767">
    <property type="entry name" value="TRNA-PSEUDOURIDINE SYNTHASE"/>
    <property type="match status" value="1"/>
</dbReference>
<dbReference type="Pfam" id="PF16198">
    <property type="entry name" value="TruB_C_2"/>
    <property type="match status" value="1"/>
</dbReference>
<dbReference type="Pfam" id="PF01509">
    <property type="entry name" value="TruB_N"/>
    <property type="match status" value="1"/>
</dbReference>
<dbReference type="SUPFAM" id="SSF55120">
    <property type="entry name" value="Pseudouridine synthase"/>
    <property type="match status" value="1"/>
</dbReference>
<evidence type="ECO:0000255" key="1">
    <source>
        <dbReference type="HAMAP-Rule" id="MF_01080"/>
    </source>
</evidence>